<dbReference type="EC" id="2.1.1.46" evidence="2"/>
<dbReference type="EC" id="2.1.1.212" evidence="2"/>
<dbReference type="EMBL" id="AY942158">
    <property type="protein sequence ID" value="AAY18581.1"/>
    <property type="molecule type" value="mRNA"/>
</dbReference>
<dbReference type="PDB" id="1ZG3">
    <property type="method" value="X-ray"/>
    <property type="resolution" value="2.35 A"/>
    <property type="chains" value="A=7-364"/>
</dbReference>
<dbReference type="PDB" id="1ZGA">
    <property type="method" value="X-ray"/>
    <property type="resolution" value="2.35 A"/>
    <property type="chains" value="A=8-364"/>
</dbReference>
<dbReference type="PDB" id="1ZGJ">
    <property type="method" value="X-ray"/>
    <property type="resolution" value="2.50 A"/>
    <property type="chains" value="A=11-364"/>
</dbReference>
<dbReference type="PDB" id="1ZHF">
    <property type="method" value="X-ray"/>
    <property type="resolution" value="2.50 A"/>
    <property type="chains" value="A=8-364"/>
</dbReference>
<dbReference type="PDBsum" id="1ZG3"/>
<dbReference type="PDBsum" id="1ZGA"/>
<dbReference type="PDBsum" id="1ZGJ"/>
<dbReference type="PDBsum" id="1ZHF"/>
<dbReference type="SMR" id="Q29U70"/>
<dbReference type="ProMEX" id="Q29U70"/>
<dbReference type="EnsemblPlants" id="rna24900">
    <property type="protein sequence ID" value="RHN62338.1"/>
    <property type="gene ID" value="gene24900"/>
</dbReference>
<dbReference type="GeneID" id="25493072"/>
<dbReference type="Gramene" id="rna24900">
    <property type="protein sequence ID" value="RHN62338.1"/>
    <property type="gene ID" value="gene24900"/>
</dbReference>
<dbReference type="KEGG" id="ag:AAY18581"/>
<dbReference type="KEGG" id="mtr:25493072"/>
<dbReference type="HOGENOM" id="CLU_005533_7_0_1"/>
<dbReference type="OrthoDB" id="2410195at2759"/>
<dbReference type="BRENDA" id="2.1.1.212">
    <property type="organism ID" value="3201"/>
</dbReference>
<dbReference type="BRENDA" id="2.1.1.270">
    <property type="organism ID" value="3201"/>
</dbReference>
<dbReference type="SABIO-RK" id="Q29U70"/>
<dbReference type="EvolutionaryTrace" id="Q29U70"/>
<dbReference type="ExpressionAtlas" id="Q29U70">
    <property type="expression patterns" value="differential"/>
</dbReference>
<dbReference type="GO" id="GO:0102670">
    <property type="term" value="F:2,7,4'-trihydroxyisoflavanone-4'-O-methyltransferase activity"/>
    <property type="evidence" value="ECO:0007669"/>
    <property type="project" value="UniProtKB-EC"/>
</dbReference>
<dbReference type="GO" id="GO:0030746">
    <property type="term" value="F:isoflavone 4'-O-methyltransferase activity"/>
    <property type="evidence" value="ECO:0007669"/>
    <property type="project" value="UniProtKB-EC"/>
</dbReference>
<dbReference type="GO" id="GO:0008171">
    <property type="term" value="F:O-methyltransferase activity"/>
    <property type="evidence" value="ECO:0007669"/>
    <property type="project" value="InterPro"/>
</dbReference>
<dbReference type="GO" id="GO:0046983">
    <property type="term" value="F:protein dimerization activity"/>
    <property type="evidence" value="ECO:0007669"/>
    <property type="project" value="InterPro"/>
</dbReference>
<dbReference type="GO" id="GO:0032259">
    <property type="term" value="P:methylation"/>
    <property type="evidence" value="ECO:0007669"/>
    <property type="project" value="UniProtKB-KW"/>
</dbReference>
<dbReference type="FunFam" id="1.10.10.10:FF:000213">
    <property type="entry name" value="Coniferyl alcohol 9-O-methyltransferase"/>
    <property type="match status" value="1"/>
</dbReference>
<dbReference type="FunFam" id="3.40.50.150:FF:000206">
    <property type="entry name" value="O-methyltransferase ZRP4"/>
    <property type="match status" value="1"/>
</dbReference>
<dbReference type="Gene3D" id="3.40.50.150">
    <property type="entry name" value="Vaccinia Virus protein VP39"/>
    <property type="match status" value="1"/>
</dbReference>
<dbReference type="Gene3D" id="1.10.10.10">
    <property type="entry name" value="Winged helix-like DNA-binding domain superfamily/Winged helix DNA-binding domain"/>
    <property type="match status" value="1"/>
</dbReference>
<dbReference type="InterPro" id="IPR016461">
    <property type="entry name" value="COMT-like"/>
</dbReference>
<dbReference type="InterPro" id="IPR001077">
    <property type="entry name" value="O_MeTrfase_dom"/>
</dbReference>
<dbReference type="InterPro" id="IPR012967">
    <property type="entry name" value="Plant_O-MeTrfase_dimerisation"/>
</dbReference>
<dbReference type="InterPro" id="IPR029063">
    <property type="entry name" value="SAM-dependent_MTases_sf"/>
</dbReference>
<dbReference type="InterPro" id="IPR036388">
    <property type="entry name" value="WH-like_DNA-bd_sf"/>
</dbReference>
<dbReference type="InterPro" id="IPR036390">
    <property type="entry name" value="WH_DNA-bd_sf"/>
</dbReference>
<dbReference type="PANTHER" id="PTHR11746">
    <property type="entry name" value="O-METHYLTRANSFERASE"/>
    <property type="match status" value="1"/>
</dbReference>
<dbReference type="Pfam" id="PF08100">
    <property type="entry name" value="Dimerisation"/>
    <property type="match status" value="1"/>
</dbReference>
<dbReference type="Pfam" id="PF00891">
    <property type="entry name" value="Methyltransf_2"/>
    <property type="match status" value="1"/>
</dbReference>
<dbReference type="PIRSF" id="PIRSF005739">
    <property type="entry name" value="O-mtase"/>
    <property type="match status" value="1"/>
</dbReference>
<dbReference type="SUPFAM" id="SSF53335">
    <property type="entry name" value="S-adenosyl-L-methionine-dependent methyltransferases"/>
    <property type="match status" value="1"/>
</dbReference>
<dbReference type="SUPFAM" id="SSF46785">
    <property type="entry name" value="Winged helix' DNA-binding domain"/>
    <property type="match status" value="1"/>
</dbReference>
<dbReference type="PROSITE" id="PS51683">
    <property type="entry name" value="SAM_OMT_II"/>
    <property type="match status" value="1"/>
</dbReference>
<gene>
    <name type="primary">HI4'OMT</name>
</gene>
<accession>Q29U70</accession>
<comment type="function">
    <text evidence="2">2-hydroxyisoflavanone 4'-O-methyltransferase involved in the biosynthesis of the phytoalexin medicarpin. Has also an in vitro (+)-6a-hydroxymaackiain-3-0-methyltransferase activity, converting the pterocarpan 6a-hydroxymaackiain into pisatin. No activity with di- or trihydroxylated isoflavones, including daidzein and genistein, or with (-)-medicarpin and maackiain. The dual activity for either 3- or 4'-O-methylation depends upon substrate availability.</text>
</comment>
<comment type="catalytic activity">
    <reaction evidence="2">
        <text>a 4'-hydroxyisoflavone + S-adenosyl-L-methionine = a 4'-methoxyisoflavone + S-adenosyl-L-homocysteine + H(+)</text>
        <dbReference type="Rhea" id="RHEA:31739"/>
        <dbReference type="ChEBI" id="CHEBI:15378"/>
        <dbReference type="ChEBI" id="CHEBI:57856"/>
        <dbReference type="ChEBI" id="CHEBI:59789"/>
        <dbReference type="ChEBI" id="CHEBI:63328"/>
        <dbReference type="ChEBI" id="CHEBI:133959"/>
        <dbReference type="EC" id="2.1.1.46"/>
    </reaction>
</comment>
<comment type="catalytic activity">
    <reaction evidence="2">
        <text>(2R,3S)-2,4',7-trihydroxyisoflavanone + S-adenosyl-L-methionine = (2R,3S)-2,7-dihydroxy-4'-methoxyisoflavanone + S-adenosyl-L-homocysteine + H(+)</text>
        <dbReference type="Rhea" id="RHEA:31371"/>
        <dbReference type="ChEBI" id="CHEBI:15378"/>
        <dbReference type="ChEBI" id="CHEBI:57856"/>
        <dbReference type="ChEBI" id="CHEBI:59789"/>
        <dbReference type="ChEBI" id="CHEBI:63325"/>
        <dbReference type="ChEBI" id="CHEBI:85906"/>
        <dbReference type="EC" id="2.1.1.212"/>
    </reaction>
</comment>
<comment type="biophysicochemical properties">
    <kinetics>
        <KM evidence="2">73.3 uM for 2,7,4'-trihydroxyisoflavanone</KM>
        <KM evidence="2">62.1 uM for 6a-hydroxymaackiain</KM>
        <KM evidence="2">99.8 uM for S-adenosyl-L-methionine</KM>
        <Vmax evidence="2">4.0 nmol/min/mg enzyme with 2,7,4'-trihydroxyisoflavanone as substrate</Vmax>
        <Vmax evidence="2">17.9 nmol/min/mg enzyme with 6a-hydroxymaackiain as substrate</Vmax>
        <Vmax evidence="2">23.9 nmol/min/mg enzyme toward S-adenosyl-L-methionine for the 4'-O-methyltransferase activity</Vmax>
    </kinetics>
</comment>
<comment type="subunit">
    <text evidence="2">Homodimer.</text>
</comment>
<comment type="similarity">
    <text evidence="1">Belongs to the class I-like SAM-binding methyltransferase superfamily. Cation-independent O-methyltransferase family. COMT subfamily.</text>
</comment>
<reference key="1">
    <citation type="journal article" date="2006" name="Plant Cell">
        <title>Structural basis for dual functionality of isoflavonoid O-methyltransferases in the evolution of plant defense responses.</title>
        <authorList>
            <person name="Liu C.J."/>
            <person name="Deavours B.E."/>
            <person name="Richard S.B."/>
            <person name="Ferrer J.L."/>
            <person name="Blount J.W."/>
            <person name="Huhman D."/>
            <person name="Dixon R.A."/>
            <person name="Noel J.P."/>
        </authorList>
    </citation>
    <scope>NUCLEOTIDE SEQUENCE [MRNA]</scope>
    <scope>FUNCTION</scope>
    <scope>CATALYTIC ACTIVITY</scope>
    <scope>BIOPHYSICOCHEMICAL PROPERTIES</scope>
    <scope>X-RAY CRYSTALLOGRAPHY (2.35 ANGSTROMS) OF 7-364 IN COMPLEX WITH SUBSTRATES</scope>
    <scope>SUBUNIT</scope>
</reference>
<name>I4OMT_MEDTR</name>
<keyword id="KW-0002">3D-structure</keyword>
<keyword id="KW-0489">Methyltransferase</keyword>
<keyword id="KW-0949">S-adenosyl-L-methionine</keyword>
<keyword id="KW-0808">Transferase</keyword>
<feature type="chain" id="PRO_0000411977" description="Isoflavone 4'-O-methyltransferase">
    <location>
        <begin position="1"/>
        <end position="364"/>
    </location>
</feature>
<feature type="active site" description="Proton acceptor" evidence="1">
    <location>
        <position position="268"/>
    </location>
</feature>
<feature type="binding site">
    <location>
        <begin position="206"/>
        <end position="209"/>
    </location>
    <ligand>
        <name>S-adenosyl-L-methionine</name>
        <dbReference type="ChEBI" id="CHEBI:59789"/>
    </ligand>
</feature>
<feature type="binding site">
    <location>
        <begin position="230"/>
        <end position="231"/>
    </location>
    <ligand>
        <name>S-adenosyl-L-methionine</name>
        <dbReference type="ChEBI" id="CHEBI:59789"/>
    </ligand>
</feature>
<feature type="binding site" evidence="1">
    <location>
        <position position="230"/>
    </location>
    <ligand>
        <name>S-adenosyl-L-methionine</name>
        <dbReference type="ChEBI" id="CHEBI:59789"/>
    </ligand>
</feature>
<feature type="binding site">
    <location>
        <begin position="250"/>
        <end position="251"/>
    </location>
    <ligand>
        <name>S-adenosyl-L-methionine</name>
        <dbReference type="ChEBI" id="CHEBI:59789"/>
    </ligand>
</feature>
<feature type="binding site">
    <location>
        <position position="264"/>
    </location>
    <ligand>
        <name>S-adenosyl-L-methionine</name>
        <dbReference type="ChEBI" id="CHEBI:59789"/>
    </ligand>
</feature>
<feature type="turn" evidence="3">
    <location>
        <begin position="8"/>
        <end position="10"/>
    </location>
</feature>
<feature type="helix" evidence="3">
    <location>
        <begin position="16"/>
        <end position="24"/>
    </location>
</feature>
<feature type="helix" evidence="3">
    <location>
        <begin position="27"/>
        <end position="39"/>
    </location>
</feature>
<feature type="helix" evidence="3">
    <location>
        <begin position="41"/>
        <end position="48"/>
    </location>
</feature>
<feature type="helix" evidence="3">
    <location>
        <begin position="54"/>
        <end position="60"/>
    </location>
</feature>
<feature type="turn" evidence="3">
    <location>
        <begin position="65"/>
        <end position="67"/>
    </location>
</feature>
<feature type="helix" evidence="3">
    <location>
        <begin position="68"/>
        <end position="80"/>
    </location>
</feature>
<feature type="strand" evidence="3">
    <location>
        <begin position="83"/>
        <end position="89"/>
    </location>
</feature>
<feature type="strand" evidence="3">
    <location>
        <begin position="92"/>
        <end position="95"/>
    </location>
</feature>
<feature type="strand" evidence="3">
    <location>
        <begin position="99"/>
        <end position="104"/>
    </location>
</feature>
<feature type="helix" evidence="3">
    <location>
        <begin position="106"/>
        <end position="109"/>
    </location>
</feature>
<feature type="strand" evidence="4">
    <location>
        <begin position="113"/>
        <end position="115"/>
    </location>
</feature>
<feature type="helix" evidence="3">
    <location>
        <begin position="120"/>
        <end position="126"/>
    </location>
</feature>
<feature type="helix" evidence="3">
    <location>
        <begin position="129"/>
        <end position="132"/>
    </location>
</feature>
<feature type="helix" evidence="3">
    <location>
        <begin position="133"/>
        <end position="137"/>
    </location>
</feature>
<feature type="helix" evidence="3">
    <location>
        <begin position="138"/>
        <end position="143"/>
    </location>
</feature>
<feature type="helix" evidence="3">
    <location>
        <begin position="150"/>
        <end position="155"/>
    </location>
</feature>
<feature type="helix" evidence="3">
    <location>
        <begin position="159"/>
        <end position="163"/>
    </location>
</feature>
<feature type="helix" evidence="3">
    <location>
        <begin position="166"/>
        <end position="168"/>
    </location>
</feature>
<feature type="helix" evidence="3">
    <location>
        <begin position="169"/>
        <end position="184"/>
    </location>
</feature>
<feature type="helix" evidence="3">
    <location>
        <begin position="186"/>
        <end position="192"/>
    </location>
</feature>
<feature type="helix" evidence="3">
    <location>
        <begin position="194"/>
        <end position="198"/>
    </location>
</feature>
<feature type="strand" evidence="3">
    <location>
        <begin position="201"/>
        <end position="206"/>
    </location>
</feature>
<feature type="helix" evidence="3">
    <location>
        <begin position="212"/>
        <end position="220"/>
    </location>
</feature>
<feature type="strand" evidence="3">
    <location>
        <begin position="224"/>
        <end position="230"/>
    </location>
</feature>
<feature type="helix" evidence="3">
    <location>
        <begin position="232"/>
        <end position="235"/>
    </location>
</feature>
<feature type="strand" evidence="3">
    <location>
        <begin position="242"/>
        <end position="248"/>
    </location>
</feature>
<feature type="turn" evidence="3">
    <location>
        <begin position="251"/>
        <end position="253"/>
    </location>
</feature>
<feature type="strand" evidence="3">
    <location>
        <begin position="259"/>
        <end position="265"/>
    </location>
</feature>
<feature type="helix" evidence="3">
    <location>
        <begin position="267"/>
        <end position="269"/>
    </location>
</feature>
<feature type="helix" evidence="3">
    <location>
        <begin position="272"/>
        <end position="285"/>
    </location>
</feature>
<feature type="helix" evidence="3">
    <location>
        <begin position="286"/>
        <end position="292"/>
    </location>
</feature>
<feature type="strand" evidence="3">
    <location>
        <begin position="294"/>
        <end position="299"/>
    </location>
</feature>
<feature type="helix" evidence="3">
    <location>
        <begin position="309"/>
        <end position="326"/>
    </location>
</feature>
<feature type="helix" evidence="3">
    <location>
        <begin position="333"/>
        <end position="342"/>
    </location>
</feature>
<feature type="strand" evidence="3">
    <location>
        <begin position="347"/>
        <end position="353"/>
    </location>
</feature>
<feature type="turn" evidence="3">
    <location>
        <begin position="354"/>
        <end position="356"/>
    </location>
</feature>
<feature type="strand" evidence="3">
    <location>
        <begin position="357"/>
        <end position="363"/>
    </location>
</feature>
<sequence length="364" mass="40754">MAFSTNGSEESELYHAQIHLYKHVYNFVSSMALKSAMELGIADAIHNHGKPMTLSELASSLKLHPSKVNILHRFLRLLTHNGFFAKTIVKGKEGDEEEEIAYSLTPPSKLLISGKPTCLSSIVKGALHPSSLDMWSSSKKWFNEDKEQTLFECATGESFWDFLNKDSESSTLSMFQDAMASDSRMFKLVLQENKRVFEGLESLVDVGGGTGGVTKLIHEIFPHLKCTVFDQPQVVGNLTGNENLNFVGGDMFKSIPSADAVLLKWVLHDWNDEQSLKILKNSKEAISHKGKDGKVIIIDISIDETSDDRGLTELQLDYDLVMLTMFLGKERTKQEWEKLIYDAGFSSYKITPISGFKSLIEVYP</sequence>
<proteinExistence type="evidence at protein level"/>
<organism>
    <name type="scientific">Medicago truncatula</name>
    <name type="common">Barrel medic</name>
    <name type="synonym">Medicago tribuloides</name>
    <dbReference type="NCBI Taxonomy" id="3880"/>
    <lineage>
        <taxon>Eukaryota</taxon>
        <taxon>Viridiplantae</taxon>
        <taxon>Streptophyta</taxon>
        <taxon>Embryophyta</taxon>
        <taxon>Tracheophyta</taxon>
        <taxon>Spermatophyta</taxon>
        <taxon>Magnoliopsida</taxon>
        <taxon>eudicotyledons</taxon>
        <taxon>Gunneridae</taxon>
        <taxon>Pentapetalae</taxon>
        <taxon>rosids</taxon>
        <taxon>fabids</taxon>
        <taxon>Fabales</taxon>
        <taxon>Fabaceae</taxon>
        <taxon>Papilionoideae</taxon>
        <taxon>50 kb inversion clade</taxon>
        <taxon>NPAAA clade</taxon>
        <taxon>Hologalegina</taxon>
        <taxon>IRL clade</taxon>
        <taxon>Trifolieae</taxon>
        <taxon>Medicago</taxon>
    </lineage>
</organism>
<protein>
    <recommendedName>
        <fullName>Isoflavone 4'-O-methyltransferase</fullName>
        <shortName>MtHI4'OMT</shortName>
        <ecNumber evidence="2">2.1.1.46</ecNumber>
    </recommendedName>
    <alternativeName>
        <fullName>2,7,4'-trihydroxyisoflavanone 4'-O-methyltransferase</fullName>
        <ecNumber evidence="2">2.1.1.212</ecNumber>
    </alternativeName>
</protein>
<evidence type="ECO:0000255" key="1">
    <source>
        <dbReference type="PROSITE-ProRule" id="PRU01020"/>
    </source>
</evidence>
<evidence type="ECO:0000269" key="2">
    <source>
    </source>
</evidence>
<evidence type="ECO:0007829" key="3">
    <source>
        <dbReference type="PDB" id="1ZG3"/>
    </source>
</evidence>
<evidence type="ECO:0007829" key="4">
    <source>
        <dbReference type="PDB" id="1ZGA"/>
    </source>
</evidence>